<dbReference type="EC" id="1.6.2.2" evidence="2"/>
<dbReference type="EMBL" id="GG704914">
    <property type="protein sequence ID" value="EAS34255.3"/>
    <property type="molecule type" value="Genomic_DNA"/>
</dbReference>
<dbReference type="RefSeq" id="XP_001245838.1">
    <property type="nucleotide sequence ID" value="XM_001245837.2"/>
</dbReference>
<dbReference type="SMR" id="Q1DWN4"/>
<dbReference type="FunCoup" id="Q1DWN4">
    <property type="interactions" value="251"/>
</dbReference>
<dbReference type="STRING" id="246410.Q1DWN4"/>
<dbReference type="GeneID" id="4564615"/>
<dbReference type="KEGG" id="cim:CIMG_05279"/>
<dbReference type="VEuPathDB" id="FungiDB:CIMG_05279"/>
<dbReference type="InParanoid" id="Q1DWN4"/>
<dbReference type="OMA" id="VQIFMCG"/>
<dbReference type="OrthoDB" id="432685at2759"/>
<dbReference type="UniPathway" id="UPA00559"/>
<dbReference type="Proteomes" id="UP000001261">
    <property type="component" value="Unassembled WGS sequence"/>
</dbReference>
<dbReference type="GO" id="GO:0005783">
    <property type="term" value="C:endoplasmic reticulum"/>
    <property type="evidence" value="ECO:0007669"/>
    <property type="project" value="TreeGrafter"/>
</dbReference>
<dbReference type="GO" id="GO:0005741">
    <property type="term" value="C:mitochondrial outer membrane"/>
    <property type="evidence" value="ECO:0007669"/>
    <property type="project" value="UniProtKB-SubCell"/>
</dbReference>
<dbReference type="GO" id="GO:0004128">
    <property type="term" value="F:cytochrome-b5 reductase activity, acting on NAD(P)H"/>
    <property type="evidence" value="ECO:0000250"/>
    <property type="project" value="UniProtKB"/>
</dbReference>
<dbReference type="GO" id="GO:0003954">
    <property type="term" value="F:NADH dehydrogenase activity"/>
    <property type="evidence" value="ECO:0000250"/>
    <property type="project" value="UniProtKB"/>
</dbReference>
<dbReference type="GO" id="GO:0016740">
    <property type="term" value="F:transferase activity"/>
    <property type="evidence" value="ECO:0007669"/>
    <property type="project" value="UniProtKB-KW"/>
</dbReference>
<dbReference type="GO" id="GO:0017183">
    <property type="term" value="P:protein histidyl modification to diphthamide"/>
    <property type="evidence" value="ECO:0000250"/>
    <property type="project" value="UniProtKB"/>
</dbReference>
<dbReference type="GO" id="GO:0002926">
    <property type="term" value="P:tRNA wobble base 5-methoxycarbonylmethyl-2-thiouridinylation"/>
    <property type="evidence" value="ECO:0000250"/>
    <property type="project" value="UniProtKB"/>
</dbReference>
<dbReference type="CDD" id="cd06183">
    <property type="entry name" value="cyt_b5_reduct_like"/>
    <property type="match status" value="1"/>
</dbReference>
<dbReference type="FunFam" id="2.40.30.10:FF:000032">
    <property type="entry name" value="NADH-cytochrome b5 reductase"/>
    <property type="match status" value="1"/>
</dbReference>
<dbReference type="FunFam" id="3.40.50.80:FF:000019">
    <property type="entry name" value="NADH-cytochrome b5 reductase"/>
    <property type="match status" value="1"/>
</dbReference>
<dbReference type="Gene3D" id="3.40.50.80">
    <property type="entry name" value="Nucleotide-binding domain of ferredoxin-NADP reductase (FNR) module"/>
    <property type="match status" value="1"/>
</dbReference>
<dbReference type="Gene3D" id="2.40.30.10">
    <property type="entry name" value="Translation factors"/>
    <property type="match status" value="1"/>
</dbReference>
<dbReference type="InterPro" id="IPR001834">
    <property type="entry name" value="CBR-like"/>
</dbReference>
<dbReference type="InterPro" id="IPR008333">
    <property type="entry name" value="Cbr1-like_FAD-bd_dom"/>
</dbReference>
<dbReference type="InterPro" id="IPR017927">
    <property type="entry name" value="FAD-bd_FR_type"/>
</dbReference>
<dbReference type="InterPro" id="IPR001709">
    <property type="entry name" value="Flavoprot_Pyr_Nucl_cyt_Rdtase"/>
</dbReference>
<dbReference type="InterPro" id="IPR039261">
    <property type="entry name" value="FNR_nucleotide-bd"/>
</dbReference>
<dbReference type="InterPro" id="IPR001433">
    <property type="entry name" value="OxRdtase_FAD/NAD-bd"/>
</dbReference>
<dbReference type="InterPro" id="IPR017938">
    <property type="entry name" value="Riboflavin_synthase-like_b-brl"/>
</dbReference>
<dbReference type="PANTHER" id="PTHR19370">
    <property type="entry name" value="NADH-CYTOCHROME B5 REDUCTASE"/>
    <property type="match status" value="1"/>
</dbReference>
<dbReference type="PANTHER" id="PTHR19370:SF184">
    <property type="entry name" value="NADH-CYTOCHROME B5 REDUCTASE-LIKE"/>
    <property type="match status" value="1"/>
</dbReference>
<dbReference type="Pfam" id="PF00970">
    <property type="entry name" value="FAD_binding_6"/>
    <property type="match status" value="1"/>
</dbReference>
<dbReference type="Pfam" id="PF00175">
    <property type="entry name" value="NAD_binding_1"/>
    <property type="match status" value="1"/>
</dbReference>
<dbReference type="PRINTS" id="PR00406">
    <property type="entry name" value="CYTB5RDTASE"/>
</dbReference>
<dbReference type="PRINTS" id="PR00371">
    <property type="entry name" value="FPNCR"/>
</dbReference>
<dbReference type="SUPFAM" id="SSF52343">
    <property type="entry name" value="Ferredoxin reductase-like, C-terminal NADP-linked domain"/>
    <property type="match status" value="1"/>
</dbReference>
<dbReference type="SUPFAM" id="SSF63380">
    <property type="entry name" value="Riboflavin synthase domain-like"/>
    <property type="match status" value="1"/>
</dbReference>
<dbReference type="PROSITE" id="PS51384">
    <property type="entry name" value="FAD_FR"/>
    <property type="match status" value="1"/>
</dbReference>
<comment type="function">
    <text evidence="2">NADH-dependent reductase for DPH3 and cytochrome b5. Required for the first step of diphthamide biosynthesis, a post-translational modification of histidine which occurs in elongation factor 2. DPH1 and DPH2 transfer a 3-amino-3-carboxypropyl (ACP) group from S-adenosyl-L-methionine (SAM) to a histidine residue, the reaction is assisted by a reduction system comprising DPH3 and a NADH-dependent reductase, predominantly CBR1. By reducing DPH3, also involved in the formation of the tRNA wobble base modification mcm5s 2U (5-methoxycarbonylmethyl-2-thiouridine), mediated by the elongator complex. The cytochrome b5/NADH cytochrome b5 reductase electron transfer system supports the catalytic activity of several sterol biosynthetic enzymes.</text>
</comment>
<comment type="catalytic activity">
    <reaction evidence="2">
        <text>2 Fe(III)-[cytochrome b5] + NADH = 2 Fe(II)-[cytochrome b5] + NAD(+) + H(+)</text>
        <dbReference type="Rhea" id="RHEA:46680"/>
        <dbReference type="Rhea" id="RHEA-COMP:10438"/>
        <dbReference type="Rhea" id="RHEA-COMP:10439"/>
        <dbReference type="ChEBI" id="CHEBI:15378"/>
        <dbReference type="ChEBI" id="CHEBI:29033"/>
        <dbReference type="ChEBI" id="CHEBI:29034"/>
        <dbReference type="ChEBI" id="CHEBI:57540"/>
        <dbReference type="ChEBI" id="CHEBI:57945"/>
        <dbReference type="EC" id="1.6.2.2"/>
    </reaction>
</comment>
<comment type="catalytic activity">
    <reaction evidence="2">
        <text>2 Fe(3+)-[Dph3] + NADH = 2 Fe(2+)-[Dph3] + NAD(+) + H(+)</text>
        <dbReference type="Rhea" id="RHEA:71231"/>
        <dbReference type="Rhea" id="RHEA-COMP:18002"/>
        <dbReference type="Rhea" id="RHEA-COMP:18003"/>
        <dbReference type="ChEBI" id="CHEBI:15378"/>
        <dbReference type="ChEBI" id="CHEBI:29033"/>
        <dbReference type="ChEBI" id="CHEBI:29034"/>
        <dbReference type="ChEBI" id="CHEBI:57540"/>
        <dbReference type="ChEBI" id="CHEBI:57945"/>
        <dbReference type="ChEBI" id="CHEBI:83228"/>
    </reaction>
    <physiologicalReaction direction="left-to-right" evidence="2">
        <dbReference type="Rhea" id="RHEA:71232"/>
    </physiologicalReaction>
</comment>
<comment type="cofactor">
    <cofactor evidence="3">
        <name>FAD</name>
        <dbReference type="ChEBI" id="CHEBI:57692"/>
    </cofactor>
</comment>
<comment type="pathway">
    <text evidence="2">Protein modification; peptidyl-diphthamide biosynthesis.</text>
</comment>
<comment type="subunit">
    <text evidence="2">Monomer. Component of the 2-(3-amino-3-carboxypropyl)histidine synthase complex composed of DPH1, DPH2, DPH3 and a NADH-dependent reductase, predominantly CBR1.</text>
</comment>
<comment type="subcellular location">
    <subcellularLocation>
        <location evidence="2">Mitochondrion outer membrane</location>
        <topology evidence="3">Single-pass membrane protein</topology>
    </subcellularLocation>
</comment>
<comment type="similarity">
    <text evidence="5">Belongs to the flavoprotein pyridine nucleotide cytochrome reductase family.</text>
</comment>
<accession>Q1DWN4</accession>
<accession>J3KFT4</accession>
<gene>
    <name type="primary">CBR1</name>
    <name type="ORF">CIMG_05279</name>
</gene>
<name>NCB5R_COCIM</name>
<feature type="chain" id="PRO_0000330150" description="NADH-cytochrome b5 reductase 1">
    <location>
        <begin position="1"/>
        <end position="308"/>
    </location>
</feature>
<feature type="transmembrane region" description="Helical" evidence="3">
    <location>
        <begin position="10"/>
        <end position="27"/>
    </location>
</feature>
<feature type="domain" description="FAD-binding FR-type" evidence="4">
    <location>
        <begin position="59"/>
        <end position="164"/>
    </location>
</feature>
<feature type="binding site" evidence="1">
    <location>
        <begin position="144"/>
        <end position="159"/>
    </location>
    <ligand>
        <name>FAD</name>
        <dbReference type="ChEBI" id="CHEBI:57692"/>
    </ligand>
</feature>
<feature type="binding site" evidence="1">
    <location>
        <begin position="170"/>
        <end position="207"/>
    </location>
    <ligand>
        <name>FAD</name>
        <dbReference type="ChEBI" id="CHEBI:57692"/>
    </ligand>
</feature>
<keyword id="KW-0274">FAD</keyword>
<keyword id="KW-0285">Flavoprotein</keyword>
<keyword id="KW-0472">Membrane</keyword>
<keyword id="KW-0496">Mitochondrion</keyword>
<keyword id="KW-1000">Mitochondrion outer membrane</keyword>
<keyword id="KW-0520">NAD</keyword>
<keyword id="KW-0560">Oxidoreductase</keyword>
<keyword id="KW-1185">Reference proteome</keyword>
<keyword id="KW-0808">Transferase</keyword>
<keyword id="KW-0812">Transmembrane</keyword>
<keyword id="KW-1133">Transmembrane helix</keyword>
<reference key="1">
    <citation type="journal article" date="2009" name="Genome Res.">
        <title>Comparative genomic analyses of the human fungal pathogens Coccidioides and their relatives.</title>
        <authorList>
            <person name="Sharpton T.J."/>
            <person name="Stajich J.E."/>
            <person name="Rounsley S.D."/>
            <person name="Gardner M.J."/>
            <person name="Wortman J.R."/>
            <person name="Jordar V.S."/>
            <person name="Maiti R."/>
            <person name="Kodira C.D."/>
            <person name="Neafsey D.E."/>
            <person name="Zeng Q."/>
            <person name="Hung C.-Y."/>
            <person name="McMahan C."/>
            <person name="Muszewska A."/>
            <person name="Grynberg M."/>
            <person name="Mandel M.A."/>
            <person name="Kellner E.M."/>
            <person name="Barker B.M."/>
            <person name="Galgiani J.N."/>
            <person name="Orbach M.J."/>
            <person name="Kirkland T.N."/>
            <person name="Cole G.T."/>
            <person name="Henn M.R."/>
            <person name="Birren B.W."/>
            <person name="Taylor J.W."/>
        </authorList>
    </citation>
    <scope>NUCLEOTIDE SEQUENCE [LARGE SCALE GENOMIC DNA]</scope>
    <source>
        <strain>RS</strain>
    </source>
</reference>
<reference key="2">
    <citation type="journal article" date="2010" name="Genome Res.">
        <title>Population genomic sequencing of Coccidioides fungi reveals recent hybridization and transposon control.</title>
        <authorList>
            <person name="Neafsey D.E."/>
            <person name="Barker B.M."/>
            <person name="Sharpton T.J."/>
            <person name="Stajich J.E."/>
            <person name="Park D.J."/>
            <person name="Whiston E."/>
            <person name="Hung C.-Y."/>
            <person name="McMahan C."/>
            <person name="White J."/>
            <person name="Sykes S."/>
            <person name="Heiman D."/>
            <person name="Young S."/>
            <person name="Zeng Q."/>
            <person name="Abouelleil A."/>
            <person name="Aftuck L."/>
            <person name="Bessette D."/>
            <person name="Brown A."/>
            <person name="FitzGerald M."/>
            <person name="Lui A."/>
            <person name="Macdonald J.P."/>
            <person name="Priest M."/>
            <person name="Orbach M.J."/>
            <person name="Galgiani J.N."/>
            <person name="Kirkland T.N."/>
            <person name="Cole G.T."/>
            <person name="Birren B.W."/>
            <person name="Henn M.R."/>
            <person name="Taylor J.W."/>
            <person name="Rounsley S.D."/>
        </authorList>
    </citation>
    <scope>GENOME REANNOTATION</scope>
    <source>
        <strain>RS</strain>
    </source>
</reference>
<organism>
    <name type="scientific">Coccidioides immitis (strain RS)</name>
    <name type="common">Valley fever fungus</name>
    <dbReference type="NCBI Taxonomy" id="246410"/>
    <lineage>
        <taxon>Eukaryota</taxon>
        <taxon>Fungi</taxon>
        <taxon>Dikarya</taxon>
        <taxon>Ascomycota</taxon>
        <taxon>Pezizomycotina</taxon>
        <taxon>Eurotiomycetes</taxon>
        <taxon>Eurotiomycetidae</taxon>
        <taxon>Onygenales</taxon>
        <taxon>Onygenaceae</taxon>
        <taxon>Coccidioides</taxon>
    </lineage>
</organism>
<proteinExistence type="inferred from homology"/>
<evidence type="ECO:0000250" key="1"/>
<evidence type="ECO:0000250" key="2">
    <source>
        <dbReference type="UniProtKB" id="P38626"/>
    </source>
</evidence>
<evidence type="ECO:0000255" key="3"/>
<evidence type="ECO:0000255" key="4">
    <source>
        <dbReference type="PROSITE-ProRule" id="PRU00716"/>
    </source>
</evidence>
<evidence type="ECO:0000305" key="5"/>
<protein>
    <recommendedName>
        <fullName>NADH-cytochrome b5 reductase 1</fullName>
        <ecNumber evidence="2">1.6.2.2</ecNumber>
    </recommendedName>
    <alternativeName>
        <fullName>Microsomal cytochrome b reductase</fullName>
    </alternativeName>
</protein>
<sequence length="308" mass="33905">MSSWTSKENINGVYIPSALLIFGTTIIKKEWIAYATALAVVLSAWKLFSNKPRKVLNPTEFQNFVLKDKTIVSHNVCIYRFALPRPTDILGLPIGQHISLAATIPGQSKEIVRSYTPISSDDDAGYFDLLVKSYPQGNISKHLTTLRIGDKMKVRGPKGAMVYTPNMVRHIGMIAGGTGITPMLQVIKAIIKGRPRNGGNDTTQIDLIFANVNPDDILLKEELDQLAKEDDAFRIYYVLNNPPEKWNGGVGFVTPDMIKAKLPAPAGDIKVLICGPPPMVSAMKKATESLGYKKANLVSKLEDQVFCF</sequence>